<proteinExistence type="inferred from homology"/>
<dbReference type="EC" id="2.1.1.74" evidence="1"/>
<dbReference type="EMBL" id="AL591688">
    <property type="protein sequence ID" value="CAC46122.1"/>
    <property type="molecule type" value="Genomic_DNA"/>
</dbReference>
<dbReference type="RefSeq" id="NP_385649.1">
    <property type="nucleotide sequence ID" value="NC_003047.1"/>
</dbReference>
<dbReference type="RefSeq" id="WP_010969291.1">
    <property type="nucleotide sequence ID" value="NC_003047.1"/>
</dbReference>
<dbReference type="SMR" id="Q92Q15"/>
<dbReference type="EnsemblBacteria" id="CAC46122">
    <property type="protein sequence ID" value="CAC46122"/>
    <property type="gene ID" value="SMc02053"/>
</dbReference>
<dbReference type="KEGG" id="sme:SMc02053"/>
<dbReference type="PATRIC" id="fig|266834.11.peg.2967"/>
<dbReference type="eggNOG" id="COG1206">
    <property type="taxonomic scope" value="Bacteria"/>
</dbReference>
<dbReference type="HOGENOM" id="CLU_033057_1_0_5"/>
<dbReference type="OrthoDB" id="9803114at2"/>
<dbReference type="Proteomes" id="UP000001976">
    <property type="component" value="Chromosome"/>
</dbReference>
<dbReference type="GO" id="GO:0005829">
    <property type="term" value="C:cytosol"/>
    <property type="evidence" value="ECO:0007669"/>
    <property type="project" value="TreeGrafter"/>
</dbReference>
<dbReference type="GO" id="GO:0050660">
    <property type="term" value="F:flavin adenine dinucleotide binding"/>
    <property type="evidence" value="ECO:0007669"/>
    <property type="project" value="UniProtKB-UniRule"/>
</dbReference>
<dbReference type="GO" id="GO:0047151">
    <property type="term" value="F:tRNA (uracil(54)-C5)-methyltransferase activity, 5,10-methylenetetrahydrofolate-dependent"/>
    <property type="evidence" value="ECO:0007669"/>
    <property type="project" value="UniProtKB-UniRule"/>
</dbReference>
<dbReference type="GO" id="GO:0030488">
    <property type="term" value="P:tRNA methylation"/>
    <property type="evidence" value="ECO:0007669"/>
    <property type="project" value="TreeGrafter"/>
</dbReference>
<dbReference type="GO" id="GO:0002098">
    <property type="term" value="P:tRNA wobble uridine modification"/>
    <property type="evidence" value="ECO:0007669"/>
    <property type="project" value="TreeGrafter"/>
</dbReference>
<dbReference type="Gene3D" id="3.50.50.60">
    <property type="entry name" value="FAD/NAD(P)-binding domain"/>
    <property type="match status" value="2"/>
</dbReference>
<dbReference type="HAMAP" id="MF_01037">
    <property type="entry name" value="TrmFO"/>
    <property type="match status" value="1"/>
</dbReference>
<dbReference type="InterPro" id="IPR036188">
    <property type="entry name" value="FAD/NAD-bd_sf"/>
</dbReference>
<dbReference type="InterPro" id="IPR002218">
    <property type="entry name" value="MnmG-rel"/>
</dbReference>
<dbReference type="InterPro" id="IPR020595">
    <property type="entry name" value="MnmG-rel_CS"/>
</dbReference>
<dbReference type="InterPro" id="IPR040131">
    <property type="entry name" value="MnmG_N"/>
</dbReference>
<dbReference type="InterPro" id="IPR004417">
    <property type="entry name" value="TrmFO"/>
</dbReference>
<dbReference type="NCBIfam" id="TIGR00137">
    <property type="entry name" value="gid_trmFO"/>
    <property type="match status" value="1"/>
</dbReference>
<dbReference type="NCBIfam" id="NF003739">
    <property type="entry name" value="PRK05335.1"/>
    <property type="match status" value="1"/>
</dbReference>
<dbReference type="PANTHER" id="PTHR11806">
    <property type="entry name" value="GLUCOSE INHIBITED DIVISION PROTEIN A"/>
    <property type="match status" value="1"/>
</dbReference>
<dbReference type="PANTHER" id="PTHR11806:SF2">
    <property type="entry name" value="METHYLENETETRAHYDROFOLATE--TRNA-(URACIL-5-)-METHYLTRANSFERASE TRMFO"/>
    <property type="match status" value="1"/>
</dbReference>
<dbReference type="Pfam" id="PF01134">
    <property type="entry name" value="GIDA"/>
    <property type="match status" value="1"/>
</dbReference>
<dbReference type="SUPFAM" id="SSF51905">
    <property type="entry name" value="FAD/NAD(P)-binding domain"/>
    <property type="match status" value="1"/>
</dbReference>
<dbReference type="PROSITE" id="PS01281">
    <property type="entry name" value="GIDA_2"/>
    <property type="match status" value="1"/>
</dbReference>
<accession>Q92Q15</accession>
<name>TRMFO_RHIME</name>
<evidence type="ECO:0000255" key="1">
    <source>
        <dbReference type="HAMAP-Rule" id="MF_01037"/>
    </source>
</evidence>
<keyword id="KW-0963">Cytoplasm</keyword>
<keyword id="KW-0274">FAD</keyword>
<keyword id="KW-0285">Flavoprotein</keyword>
<keyword id="KW-0489">Methyltransferase</keyword>
<keyword id="KW-0520">NAD</keyword>
<keyword id="KW-0521">NADP</keyword>
<keyword id="KW-1185">Reference proteome</keyword>
<keyword id="KW-0808">Transferase</keyword>
<keyword id="KW-0819">tRNA processing</keyword>
<protein>
    <recommendedName>
        <fullName evidence="1">Methylenetetrahydrofolate--tRNA-(uracil-5-)-methyltransferase TrmFO</fullName>
        <ecNumber evidence="1">2.1.1.74</ecNumber>
    </recommendedName>
    <alternativeName>
        <fullName evidence="1">Folate-dependent tRNA (uracil-5-)-methyltransferase</fullName>
    </alternativeName>
    <alternativeName>
        <fullName evidence="1">Folate-dependent tRNA(M-5-U54)-methyltransferase</fullName>
    </alternativeName>
</protein>
<feature type="chain" id="PRO_0000117255" description="Methylenetetrahydrofolate--tRNA-(uracil-5-)-methyltransferase TrmFO">
    <location>
        <begin position="1"/>
        <end position="472"/>
    </location>
</feature>
<feature type="binding site" evidence="1">
    <location>
        <begin position="15"/>
        <end position="20"/>
    </location>
    <ligand>
        <name>FAD</name>
        <dbReference type="ChEBI" id="CHEBI:57692"/>
    </ligand>
</feature>
<gene>
    <name evidence="1" type="primary">trmFO</name>
    <name type="synonym">gid</name>
    <name type="ordered locus">R01543</name>
    <name type="ORF">SMc02053</name>
</gene>
<reference key="1">
    <citation type="journal article" date="2001" name="Proc. Natl. Acad. Sci. U.S.A.">
        <title>Analysis of the chromosome sequence of the legume symbiont Sinorhizobium meliloti strain 1021.</title>
        <authorList>
            <person name="Capela D."/>
            <person name="Barloy-Hubler F."/>
            <person name="Gouzy J."/>
            <person name="Bothe G."/>
            <person name="Ampe F."/>
            <person name="Batut J."/>
            <person name="Boistard P."/>
            <person name="Becker A."/>
            <person name="Boutry M."/>
            <person name="Cadieu E."/>
            <person name="Dreano S."/>
            <person name="Gloux S."/>
            <person name="Godrie T."/>
            <person name="Goffeau A."/>
            <person name="Kahn D."/>
            <person name="Kiss E."/>
            <person name="Lelaure V."/>
            <person name="Masuy D."/>
            <person name="Pohl T."/>
            <person name="Portetelle D."/>
            <person name="Puehler A."/>
            <person name="Purnelle B."/>
            <person name="Ramsperger U."/>
            <person name="Renard C."/>
            <person name="Thebault P."/>
            <person name="Vandenbol M."/>
            <person name="Weidner S."/>
            <person name="Galibert F."/>
        </authorList>
    </citation>
    <scope>NUCLEOTIDE SEQUENCE [LARGE SCALE GENOMIC DNA]</scope>
    <source>
        <strain>1021</strain>
    </source>
</reference>
<reference key="2">
    <citation type="journal article" date="2001" name="Science">
        <title>The composite genome of the legume symbiont Sinorhizobium meliloti.</title>
        <authorList>
            <person name="Galibert F."/>
            <person name="Finan T.M."/>
            <person name="Long S.R."/>
            <person name="Puehler A."/>
            <person name="Abola P."/>
            <person name="Ampe F."/>
            <person name="Barloy-Hubler F."/>
            <person name="Barnett M.J."/>
            <person name="Becker A."/>
            <person name="Boistard P."/>
            <person name="Bothe G."/>
            <person name="Boutry M."/>
            <person name="Bowser L."/>
            <person name="Buhrmester J."/>
            <person name="Cadieu E."/>
            <person name="Capela D."/>
            <person name="Chain P."/>
            <person name="Cowie A."/>
            <person name="Davis R.W."/>
            <person name="Dreano S."/>
            <person name="Federspiel N.A."/>
            <person name="Fisher R.F."/>
            <person name="Gloux S."/>
            <person name="Godrie T."/>
            <person name="Goffeau A."/>
            <person name="Golding B."/>
            <person name="Gouzy J."/>
            <person name="Gurjal M."/>
            <person name="Hernandez-Lucas I."/>
            <person name="Hong A."/>
            <person name="Huizar L."/>
            <person name="Hyman R.W."/>
            <person name="Jones T."/>
            <person name="Kahn D."/>
            <person name="Kahn M.L."/>
            <person name="Kalman S."/>
            <person name="Keating D.H."/>
            <person name="Kiss E."/>
            <person name="Komp C."/>
            <person name="Lelaure V."/>
            <person name="Masuy D."/>
            <person name="Palm C."/>
            <person name="Peck M.C."/>
            <person name="Pohl T.M."/>
            <person name="Portetelle D."/>
            <person name="Purnelle B."/>
            <person name="Ramsperger U."/>
            <person name="Surzycki R."/>
            <person name="Thebault P."/>
            <person name="Vandenbol M."/>
            <person name="Vorhoelter F.J."/>
            <person name="Weidner S."/>
            <person name="Wells D.H."/>
            <person name="Wong K."/>
            <person name="Yeh K.-C."/>
            <person name="Batut J."/>
        </authorList>
    </citation>
    <scope>NUCLEOTIDE SEQUENCE [LARGE SCALE GENOMIC DNA]</scope>
    <source>
        <strain>1021</strain>
    </source>
</reference>
<organism>
    <name type="scientific">Rhizobium meliloti (strain 1021)</name>
    <name type="common">Ensifer meliloti</name>
    <name type="synonym">Sinorhizobium meliloti</name>
    <dbReference type="NCBI Taxonomy" id="266834"/>
    <lineage>
        <taxon>Bacteria</taxon>
        <taxon>Pseudomonadati</taxon>
        <taxon>Pseudomonadota</taxon>
        <taxon>Alphaproteobacteria</taxon>
        <taxon>Hyphomicrobiales</taxon>
        <taxon>Rhizobiaceae</taxon>
        <taxon>Sinorhizobium/Ensifer group</taxon>
        <taxon>Sinorhizobium</taxon>
    </lineage>
</organism>
<comment type="function">
    <text evidence="1">Catalyzes the folate-dependent formation of 5-methyl-uridine at position 54 (M-5-U54) in all tRNAs.</text>
</comment>
<comment type="catalytic activity">
    <reaction evidence="1">
        <text>uridine(54) in tRNA + (6R)-5,10-methylene-5,6,7,8-tetrahydrofolate + NADH + H(+) = 5-methyluridine(54) in tRNA + (6S)-5,6,7,8-tetrahydrofolate + NAD(+)</text>
        <dbReference type="Rhea" id="RHEA:16873"/>
        <dbReference type="Rhea" id="RHEA-COMP:10167"/>
        <dbReference type="Rhea" id="RHEA-COMP:10193"/>
        <dbReference type="ChEBI" id="CHEBI:15378"/>
        <dbReference type="ChEBI" id="CHEBI:15636"/>
        <dbReference type="ChEBI" id="CHEBI:57453"/>
        <dbReference type="ChEBI" id="CHEBI:57540"/>
        <dbReference type="ChEBI" id="CHEBI:57945"/>
        <dbReference type="ChEBI" id="CHEBI:65315"/>
        <dbReference type="ChEBI" id="CHEBI:74447"/>
        <dbReference type="EC" id="2.1.1.74"/>
    </reaction>
</comment>
<comment type="catalytic activity">
    <reaction evidence="1">
        <text>uridine(54) in tRNA + (6R)-5,10-methylene-5,6,7,8-tetrahydrofolate + NADPH + H(+) = 5-methyluridine(54) in tRNA + (6S)-5,6,7,8-tetrahydrofolate + NADP(+)</text>
        <dbReference type="Rhea" id="RHEA:62372"/>
        <dbReference type="Rhea" id="RHEA-COMP:10167"/>
        <dbReference type="Rhea" id="RHEA-COMP:10193"/>
        <dbReference type="ChEBI" id="CHEBI:15378"/>
        <dbReference type="ChEBI" id="CHEBI:15636"/>
        <dbReference type="ChEBI" id="CHEBI:57453"/>
        <dbReference type="ChEBI" id="CHEBI:57783"/>
        <dbReference type="ChEBI" id="CHEBI:58349"/>
        <dbReference type="ChEBI" id="CHEBI:65315"/>
        <dbReference type="ChEBI" id="CHEBI:74447"/>
        <dbReference type="EC" id="2.1.1.74"/>
    </reaction>
</comment>
<comment type="cofactor">
    <cofactor evidence="1">
        <name>FAD</name>
        <dbReference type="ChEBI" id="CHEBI:57692"/>
    </cofactor>
</comment>
<comment type="subcellular location">
    <subcellularLocation>
        <location evidence="1">Cytoplasm</location>
    </subcellularLocation>
</comment>
<comment type="similarity">
    <text evidence="1">Belongs to the MnmG family. TrmFO subfamily.</text>
</comment>
<sequence>MNKTTSSHSPIHVIGGGLAGSEAAWQIAEAGVPVILHEMRGVRGTDAHKTESLAELVCSNSFRSDDATSNAVGVLHAEMRLAGSLIMRCADLNQVPAGGALAVDREGFAEAVSAAIADHPLITVLREEIRGLPPKDWDLAIIATGPLTAPDLAEAIRAETGADALAFFDAIAPIVHADTIDMDICWHQSRYDKVGPGGTGKDYINCPLTQEQYDAFVDALIAGDKAGFKEWEGTPYFDGCLPIEVMAERGRETLRHGPMKPMGLTNAHNPSVKPYAVVQLRQDNALGTLYNMVGFQTKLKYGAQGEVFRMIPGLQNAEFARLGGLHRNTYINSPTLLDHSLTLKSRPGLRFAGQITGCEGYVESASIGLLAGRFAAAERKGVSPVLPPVTTAFGALLDHITGGHIVSDDEPGKRSFQPMNINFGLFPPLEPGALTRPEGAKRFRGKEKALAKKQAMASRALSDCASWLDQAV</sequence>